<accession>K5BIS0</accession>
<keyword id="KW-0002">3D-structure</keyword>
<keyword id="KW-0119">Carbohydrate metabolism</keyword>
<keyword id="KW-0378">Hydrolase</keyword>
<keyword id="KW-1185">Reference proteome</keyword>
<comment type="function">
    <text evidence="1">Hydrolase involved in the biosynthesis of 3-O-methylmannose polysaccharides (MMP), which are intracellular polymethylated polysaccharides implicated in the modulation of fatty acid metabolism in non-tuberculous mycobacteria (PubMed:36707645). Highly specific hydrolase that catalyzes the internal cleavage of MMP (PubMed:36707645). Is able to hydrolyze purified MMP into distinct lower order oligomannosides but does not cleave acylated or deacylated forms of 6-O-methylglucose lipopolysaccharide (MGLP), beta-mannans, synthetic 4alpha-oligomannosides or its own reaction products (PubMed:36707645). Products were identified as four distinct oligomannosides differing in the number of mannose units (4 to 8) and methylation pattern (free or methylated C1-OH) (PubMed:36707645). Might serve as a recycling enzyme that hydrolyzes mature MMP into defined-size smaller oligomannosides that are, in turn, substrates for ManT and MeT1 activities for further processing into new daughter MMP chains (PubMed:36707645).</text>
</comment>
<comment type="catalytic activity">
    <reaction evidence="1">
        <text>Endohydrolysis of 3-O-methyl-alpha-D-mannosyl-(1-&gt;4)-3-O-methyl-D-mannose linkages within (1,4)-3-O-methyl-alpha-D-mannnan substrates.</text>
        <dbReference type="EC" id="3.2.1.221"/>
    </reaction>
</comment>
<comment type="biophysicochemical properties">
    <kinetics>
        <KM evidence="1">0.28 mM for MMP (at 37 degrees Celsius)</KM>
        <KM evidence="1">0.36 mM for MMP (at 45 degrees Celsius)</KM>
        <Vmax evidence="1">0.76 umol/min/mg enzyme (at 37 degrees Celsius)</Vmax>
        <Vmax evidence="1">1.42 umol/min/mg enzyme (at 45 degrees Celsius)</Vmax>
        <text evidence="1">kcat is 0.011 sec(-1) (at 37 degrees Celsius). kcat is 0.021 sec(-1) (at 45 degrees Celsius).</text>
    </kinetics>
    <phDependence>
        <text evidence="1">Optimum pH is 6.5.</text>
    </phDependence>
    <temperatureDependence>
        <text evidence="1">Optimum temperature is 45 degrees Celsius.</text>
    </temperatureDependence>
</comment>
<comment type="subunit">
    <text evidence="1">Monomer in solution.</text>
</comment>
<comment type="sequence caution" evidence="3">
    <conflict type="frameshift">
        <sequence resource="EMBL-CDS" id="EKF21849"/>
    </conflict>
</comment>
<reference key="1">
    <citation type="journal article" date="2012" name="J. Bacteriol.">
        <title>Genome sequence of Mycobacterium hassiacum DSM 44199, a rare source of heat-stable mycobacterial proteins.</title>
        <authorList>
            <person name="Tiago I."/>
            <person name="Maranha A."/>
            <person name="Mendes V."/>
            <person name="Alarico S."/>
            <person name="Moynihan P.J."/>
            <person name="Clarke A.J."/>
            <person name="Macedo-Ribeiro S."/>
            <person name="Pereira P.J."/>
            <person name="Empadinhas N."/>
        </authorList>
    </citation>
    <scope>NUCLEOTIDE SEQUENCE [LARGE SCALE GENOMIC DNA]</scope>
    <source>
        <strain>DSM 44199 / CIP 105218 / JCM 12690 / 3849</strain>
    </source>
</reference>
<reference key="2">
    <citation type="journal article" date="2019" name="Microbiol. Resour. Announc.">
        <title>Complete genome sequence of Mycolicibacterium hassiacum DSM 44199.</title>
        <authorList>
            <person name="Sanchez M."/>
            <person name="Blesa A."/>
            <person name="Sacristan-Horcajada E."/>
            <person name="Berenguer J."/>
        </authorList>
    </citation>
    <scope>NUCLEOTIDE SEQUENCE [LARGE SCALE GENOMIC DNA]</scope>
    <source>
        <strain>DSM 44199 / CIP 105218 / JCM 12690 / 3849</strain>
    </source>
</reference>
<reference evidence="6" key="3">
    <citation type="journal article" date="2023" name="Commun. Biol.">
        <title>Self-recycling and partially conservative replication of mycobacterial methylmannose polysaccharides.</title>
        <authorList>
            <person name="Maranha A."/>
            <person name="Costa M."/>
            <person name="Ripoll-Rozada J."/>
            <person name="Manso J.A."/>
            <person name="Miranda V."/>
            <person name="Mendes V.M."/>
            <person name="Manadas B."/>
            <person name="Macedo-Ribeiro S."/>
            <person name="Ventura M.R."/>
            <person name="Pereira P.J.B."/>
            <person name="Empadinhas N."/>
        </authorList>
    </citation>
    <scope>X-RAY CRYSTALLOGRAPHY (1.35 ANGSTROMS) OF 2-359</scope>
    <scope>FUNCTION</scope>
    <scope>CATALYTIC ACTIVITY</scope>
    <scope>BIOPHYSICOCHEMICAL PROPERTIES</scope>
    <scope>SUBUNIT</scope>
    <scope>MUTAGENESIS OF ASP-47; ASP-50 AND GLU-262</scope>
    <source>
        <strain>DSM 44199 / CIP 105218 / JCM 12690 / 3849</strain>
    </source>
</reference>
<dbReference type="EC" id="3.2.1.221" evidence="1"/>
<dbReference type="EMBL" id="AMRA01000112">
    <property type="protein sequence ID" value="EKF21849.1"/>
    <property type="status" value="ALT_FRAME"/>
    <property type="molecule type" value="Genomic_DNA"/>
</dbReference>
<dbReference type="EMBL" id="LR026975">
    <property type="protein sequence ID" value="VCT92674.1"/>
    <property type="molecule type" value="Genomic_DNA"/>
</dbReference>
<dbReference type="RefSeq" id="WP_018354040.1">
    <property type="nucleotide sequence ID" value="NZ_ANBN01000026.1"/>
</dbReference>
<dbReference type="PDB" id="7QSJ">
    <property type="method" value="X-ray"/>
    <property type="resolution" value="1.35 A"/>
    <property type="chains" value="A/B=2-359"/>
</dbReference>
<dbReference type="PDBsum" id="7QSJ"/>
<dbReference type="SMR" id="K5BIS0"/>
<dbReference type="STRING" id="1122247.GCA_000379865_01286"/>
<dbReference type="KEGG" id="mhas:MHAS_04404"/>
<dbReference type="PATRIC" id="fig|1122247.3.peg.3994"/>
<dbReference type="eggNOG" id="COG3387">
    <property type="taxonomic scope" value="Bacteria"/>
</dbReference>
<dbReference type="Proteomes" id="UP000006265">
    <property type="component" value="Unassembled WGS sequence"/>
</dbReference>
<dbReference type="GO" id="GO:0016787">
    <property type="term" value="F:hydrolase activity"/>
    <property type="evidence" value="ECO:0007669"/>
    <property type="project" value="UniProtKB-KW"/>
</dbReference>
<dbReference type="GO" id="GO:0005975">
    <property type="term" value="P:carbohydrate metabolic process"/>
    <property type="evidence" value="ECO:0007669"/>
    <property type="project" value="InterPro"/>
</dbReference>
<dbReference type="Gene3D" id="1.50.10.10">
    <property type="match status" value="1"/>
</dbReference>
<dbReference type="InterPro" id="IPR008928">
    <property type="entry name" value="6-hairpin_glycosidase_sf"/>
</dbReference>
<dbReference type="InterPro" id="IPR012341">
    <property type="entry name" value="6hp_glycosidase-like_sf"/>
</dbReference>
<dbReference type="SUPFAM" id="SSF48208">
    <property type="entry name" value="Six-hairpin glycosidases"/>
    <property type="match status" value="1"/>
</dbReference>
<feature type="chain" id="PRO_0000461212" description="MMP endo-(1,4)-3-O-methyl-alpha-D-mannosidase">
    <location>
        <begin position="1"/>
        <end position="359"/>
    </location>
</feature>
<feature type="mutagenesis site" description="Strong decrease in activity." evidence="1">
    <original>D</original>
    <variation>A</variation>
    <location>
        <position position="47"/>
    </location>
</feature>
<feature type="mutagenesis site" description="Strong decrease in activity." evidence="1">
    <original>D</original>
    <variation>A</variation>
    <location>
        <position position="50"/>
    </location>
</feature>
<feature type="mutagenesis site" description="Loss of activity." evidence="1">
    <original>E</original>
    <variation>A</variation>
    <location>
        <position position="262"/>
    </location>
</feature>
<protein>
    <recommendedName>
        <fullName evidence="3">MMP endo-(1,4)-3-O-methyl-alpha-D-mannosidase</fullName>
        <shortName evidence="2">MMP endomannosidase</shortName>
        <ecNumber evidence="1">3.2.1.221</ecNumber>
    </recommendedName>
    <alternativeName>
        <fullName evidence="2">Alpha-(1-&gt;4)-endomannosidase</fullName>
    </alternativeName>
    <alternativeName>
        <fullName evidence="2">MMP hydrolase</fullName>
    </alternativeName>
</protein>
<gene>
    <name evidence="2" type="primary">mmpH</name>
    <name evidence="4" type="ORF">C731_4164</name>
    <name evidence="5" type="ORF">MHAS_04404</name>
</gene>
<proteinExistence type="evidence at protein level"/>
<name>MMPH_MYCHD</name>
<evidence type="ECO:0000269" key="1">
    <source>
    </source>
</evidence>
<evidence type="ECO:0000303" key="2">
    <source>
    </source>
</evidence>
<evidence type="ECO:0000305" key="3"/>
<evidence type="ECO:0000312" key="4">
    <source>
        <dbReference type="EMBL" id="EKF21849.1"/>
    </source>
</evidence>
<evidence type="ECO:0000312" key="5">
    <source>
        <dbReference type="EMBL" id="VCT92674.1"/>
    </source>
</evidence>
<evidence type="ECO:0007744" key="6">
    <source>
        <dbReference type="PDB" id="7QSJ"/>
    </source>
</evidence>
<organism>
    <name type="scientific">Mycolicibacterium hassiacum (strain DSM 44199 / CIP 105218 / JCM 12690 / 3849)</name>
    <name type="common">Mycobacterium hassiacum</name>
    <dbReference type="NCBI Taxonomy" id="1122247"/>
    <lineage>
        <taxon>Bacteria</taxon>
        <taxon>Bacillati</taxon>
        <taxon>Actinomycetota</taxon>
        <taxon>Actinomycetes</taxon>
        <taxon>Mycobacteriales</taxon>
        <taxon>Mycobacteriaceae</taxon>
        <taxon>Mycolicibacterium</taxon>
    </lineage>
</organism>
<sequence>MLRDDLDAVPGVPGVLTPEQCRQTAQAIADAQEPSGALPWFEGGHTDPWDHVENAMALTVAGLLEPARAAFDWCRTTQRPDGSWPIQIRNGVVEDANSDSNFCAYVATGVWHHVLITGDRRFAETMWPVVAKAIDFVIDMQLPGGEIAWARSPSGLYEEALLTGCASIYHSIRCALALADYMGEPQPEWEVAVGRLGHAIAEHPEAFVTKDRWSMEWYYPVLGGALRGEAARARINRRWNDFVVPGLGIRCVDDRPWVTGAETCELVLALDAIGDLTRAHEQFAAMHHLREEDGSYWTGLVYDDGKRWPIERTTWTGAAMILAADALSRTTPGNGIFRGVDLPRGLEGEYDCACATSER</sequence>